<gene>
    <name evidence="1" type="primary">rpmJ1</name>
    <name type="ordered locus">KRH_06400</name>
</gene>
<dbReference type="EMBL" id="AP009152">
    <property type="protein sequence ID" value="BAG28987.1"/>
    <property type="molecule type" value="Genomic_DNA"/>
</dbReference>
<dbReference type="SMR" id="B2GJ17"/>
<dbReference type="STRING" id="378753.KRH_06400"/>
<dbReference type="KEGG" id="krh:KRH_06400"/>
<dbReference type="eggNOG" id="COG0257">
    <property type="taxonomic scope" value="Bacteria"/>
</dbReference>
<dbReference type="HOGENOM" id="CLU_135723_6_2_11"/>
<dbReference type="OrthoDB" id="9802520at2"/>
<dbReference type="Proteomes" id="UP000008838">
    <property type="component" value="Chromosome"/>
</dbReference>
<dbReference type="GO" id="GO:0005737">
    <property type="term" value="C:cytoplasm"/>
    <property type="evidence" value="ECO:0007669"/>
    <property type="project" value="UniProtKB-ARBA"/>
</dbReference>
<dbReference type="GO" id="GO:1990904">
    <property type="term" value="C:ribonucleoprotein complex"/>
    <property type="evidence" value="ECO:0007669"/>
    <property type="project" value="UniProtKB-KW"/>
</dbReference>
<dbReference type="GO" id="GO:0005840">
    <property type="term" value="C:ribosome"/>
    <property type="evidence" value="ECO:0007669"/>
    <property type="project" value="UniProtKB-KW"/>
</dbReference>
<dbReference type="GO" id="GO:0003735">
    <property type="term" value="F:structural constituent of ribosome"/>
    <property type="evidence" value="ECO:0007669"/>
    <property type="project" value="InterPro"/>
</dbReference>
<dbReference type="GO" id="GO:0006412">
    <property type="term" value="P:translation"/>
    <property type="evidence" value="ECO:0007669"/>
    <property type="project" value="UniProtKB-UniRule"/>
</dbReference>
<dbReference type="HAMAP" id="MF_00251">
    <property type="entry name" value="Ribosomal_bL36"/>
    <property type="match status" value="1"/>
</dbReference>
<dbReference type="InterPro" id="IPR000473">
    <property type="entry name" value="Ribosomal_bL36"/>
</dbReference>
<dbReference type="InterPro" id="IPR035977">
    <property type="entry name" value="Ribosomal_bL36_sp"/>
</dbReference>
<dbReference type="NCBIfam" id="TIGR01022">
    <property type="entry name" value="rpmJ_bact"/>
    <property type="match status" value="1"/>
</dbReference>
<dbReference type="PANTHER" id="PTHR42888">
    <property type="entry name" value="50S RIBOSOMAL PROTEIN L36, CHLOROPLASTIC"/>
    <property type="match status" value="1"/>
</dbReference>
<dbReference type="PANTHER" id="PTHR42888:SF1">
    <property type="entry name" value="LARGE RIBOSOMAL SUBUNIT PROTEIN BL36C"/>
    <property type="match status" value="1"/>
</dbReference>
<dbReference type="Pfam" id="PF00444">
    <property type="entry name" value="Ribosomal_L36"/>
    <property type="match status" value="1"/>
</dbReference>
<dbReference type="SUPFAM" id="SSF57840">
    <property type="entry name" value="Ribosomal protein L36"/>
    <property type="match status" value="1"/>
</dbReference>
<dbReference type="PROSITE" id="PS00828">
    <property type="entry name" value="RIBOSOMAL_L36"/>
    <property type="match status" value="1"/>
</dbReference>
<comment type="similarity">
    <text evidence="1">Belongs to the bacterial ribosomal protein bL36 family.</text>
</comment>
<reference key="1">
    <citation type="journal article" date="2008" name="J. Bacteriol.">
        <title>Complete genome sequence of the soil actinomycete Kocuria rhizophila.</title>
        <authorList>
            <person name="Takarada H."/>
            <person name="Sekine M."/>
            <person name="Kosugi H."/>
            <person name="Matsuo Y."/>
            <person name="Fujisawa T."/>
            <person name="Omata S."/>
            <person name="Kishi E."/>
            <person name="Shimizu A."/>
            <person name="Tsukatani N."/>
            <person name="Tanikawa S."/>
            <person name="Fujita N."/>
            <person name="Harayama S."/>
        </authorList>
    </citation>
    <scope>NUCLEOTIDE SEQUENCE [LARGE SCALE GENOMIC DNA]</scope>
    <source>
        <strain>ATCC 9341 / DSM 348 / NBRC 103217 / DC2201</strain>
    </source>
</reference>
<organism>
    <name type="scientific">Kocuria rhizophila (strain ATCC 9341 / DSM 348 / NBRC 103217 / DC2201)</name>
    <dbReference type="NCBI Taxonomy" id="378753"/>
    <lineage>
        <taxon>Bacteria</taxon>
        <taxon>Bacillati</taxon>
        <taxon>Actinomycetota</taxon>
        <taxon>Actinomycetes</taxon>
        <taxon>Micrococcales</taxon>
        <taxon>Micrococcaceae</taxon>
        <taxon>Kocuria</taxon>
    </lineage>
</organism>
<protein>
    <recommendedName>
        <fullName evidence="1">Large ribosomal subunit protein bL36A</fullName>
    </recommendedName>
    <alternativeName>
        <fullName evidence="2">50S ribosomal protein L36 1</fullName>
    </alternativeName>
</protein>
<feature type="chain" id="PRO_0000344686" description="Large ribosomal subunit protein bL36A">
    <location>
        <begin position="1"/>
        <end position="37"/>
    </location>
</feature>
<sequence>MKVQPSVKQICDKCKVIRRNGRVMVICENPRHKQRQG</sequence>
<keyword id="KW-1185">Reference proteome</keyword>
<keyword id="KW-0687">Ribonucleoprotein</keyword>
<keyword id="KW-0689">Ribosomal protein</keyword>
<name>RL361_KOCRD</name>
<accession>B2GJ17</accession>
<evidence type="ECO:0000255" key="1">
    <source>
        <dbReference type="HAMAP-Rule" id="MF_00251"/>
    </source>
</evidence>
<evidence type="ECO:0000305" key="2"/>
<proteinExistence type="inferred from homology"/>